<dbReference type="EMBL" id="BA000040">
    <property type="protein sequence ID" value="BAC45911.1"/>
    <property type="molecule type" value="Genomic_DNA"/>
</dbReference>
<dbReference type="RefSeq" id="NP_767286.1">
    <property type="nucleotide sequence ID" value="NC_004463.1"/>
</dbReference>
<dbReference type="RefSeq" id="WP_011083473.1">
    <property type="nucleotide sequence ID" value="NC_004463.1"/>
</dbReference>
<dbReference type="SMR" id="Q89WN2"/>
<dbReference type="FunCoup" id="Q89WN2">
    <property type="interactions" value="294"/>
</dbReference>
<dbReference type="STRING" id="224911.AAV28_00065"/>
<dbReference type="EnsemblBacteria" id="BAC45911">
    <property type="protein sequence ID" value="BAC45911"/>
    <property type="gene ID" value="BAC45911"/>
</dbReference>
<dbReference type="GeneID" id="46487919"/>
<dbReference type="KEGG" id="bja:bll0646"/>
<dbReference type="PATRIC" id="fig|224911.44.peg.15"/>
<dbReference type="eggNOG" id="COG1220">
    <property type="taxonomic scope" value="Bacteria"/>
</dbReference>
<dbReference type="HOGENOM" id="CLU_033123_0_0_5"/>
<dbReference type="InParanoid" id="Q89WN2"/>
<dbReference type="OrthoDB" id="9804062at2"/>
<dbReference type="PhylomeDB" id="Q89WN2"/>
<dbReference type="Proteomes" id="UP000002526">
    <property type="component" value="Chromosome"/>
</dbReference>
<dbReference type="GO" id="GO:0009376">
    <property type="term" value="C:HslUV protease complex"/>
    <property type="evidence" value="ECO:0000318"/>
    <property type="project" value="GO_Central"/>
</dbReference>
<dbReference type="GO" id="GO:0005524">
    <property type="term" value="F:ATP binding"/>
    <property type="evidence" value="ECO:0000318"/>
    <property type="project" value="GO_Central"/>
</dbReference>
<dbReference type="GO" id="GO:0016887">
    <property type="term" value="F:ATP hydrolysis activity"/>
    <property type="evidence" value="ECO:0000318"/>
    <property type="project" value="GO_Central"/>
</dbReference>
<dbReference type="GO" id="GO:0008233">
    <property type="term" value="F:peptidase activity"/>
    <property type="evidence" value="ECO:0007669"/>
    <property type="project" value="InterPro"/>
</dbReference>
<dbReference type="GO" id="GO:0036402">
    <property type="term" value="F:proteasome-activating activity"/>
    <property type="evidence" value="ECO:0007669"/>
    <property type="project" value="UniProtKB-UniRule"/>
</dbReference>
<dbReference type="GO" id="GO:0043335">
    <property type="term" value="P:protein unfolding"/>
    <property type="evidence" value="ECO:0007669"/>
    <property type="project" value="UniProtKB-UniRule"/>
</dbReference>
<dbReference type="GO" id="GO:0051603">
    <property type="term" value="P:proteolysis involved in protein catabolic process"/>
    <property type="evidence" value="ECO:0000318"/>
    <property type="project" value="GO_Central"/>
</dbReference>
<dbReference type="CDD" id="cd19498">
    <property type="entry name" value="RecA-like_HslU"/>
    <property type="match status" value="1"/>
</dbReference>
<dbReference type="FunFam" id="3.40.50.300:FF:000213">
    <property type="entry name" value="ATP-dependent protease ATPase subunit HslU"/>
    <property type="match status" value="1"/>
</dbReference>
<dbReference type="FunFam" id="3.40.50.300:FF:000220">
    <property type="entry name" value="ATP-dependent protease ATPase subunit HslU"/>
    <property type="match status" value="1"/>
</dbReference>
<dbReference type="Gene3D" id="1.10.8.60">
    <property type="match status" value="1"/>
</dbReference>
<dbReference type="Gene3D" id="1.10.8.10">
    <property type="entry name" value="DNA helicase RuvA subunit, C-terminal domain"/>
    <property type="match status" value="1"/>
</dbReference>
<dbReference type="Gene3D" id="3.40.50.300">
    <property type="entry name" value="P-loop containing nucleotide triphosphate hydrolases"/>
    <property type="match status" value="2"/>
</dbReference>
<dbReference type="HAMAP" id="MF_00249">
    <property type="entry name" value="HslU"/>
    <property type="match status" value="1"/>
</dbReference>
<dbReference type="InterPro" id="IPR003593">
    <property type="entry name" value="AAA+_ATPase"/>
</dbReference>
<dbReference type="InterPro" id="IPR050052">
    <property type="entry name" value="ATP-dep_Clp_protease_ClpX"/>
</dbReference>
<dbReference type="InterPro" id="IPR003959">
    <property type="entry name" value="ATPase_AAA_core"/>
</dbReference>
<dbReference type="InterPro" id="IPR019489">
    <property type="entry name" value="Clp_ATPase_C"/>
</dbReference>
<dbReference type="InterPro" id="IPR004491">
    <property type="entry name" value="HslU"/>
</dbReference>
<dbReference type="InterPro" id="IPR027417">
    <property type="entry name" value="P-loop_NTPase"/>
</dbReference>
<dbReference type="NCBIfam" id="TIGR00390">
    <property type="entry name" value="hslU"/>
    <property type="match status" value="1"/>
</dbReference>
<dbReference type="NCBIfam" id="NF003544">
    <property type="entry name" value="PRK05201.1"/>
    <property type="match status" value="1"/>
</dbReference>
<dbReference type="PANTHER" id="PTHR48102">
    <property type="entry name" value="ATP-DEPENDENT CLP PROTEASE ATP-BINDING SUBUNIT CLPX-LIKE, MITOCHONDRIAL-RELATED"/>
    <property type="match status" value="1"/>
</dbReference>
<dbReference type="PANTHER" id="PTHR48102:SF3">
    <property type="entry name" value="ATP-DEPENDENT PROTEASE ATPASE SUBUNIT HSLU"/>
    <property type="match status" value="1"/>
</dbReference>
<dbReference type="Pfam" id="PF00004">
    <property type="entry name" value="AAA"/>
    <property type="match status" value="1"/>
</dbReference>
<dbReference type="Pfam" id="PF07724">
    <property type="entry name" value="AAA_2"/>
    <property type="match status" value="1"/>
</dbReference>
<dbReference type="Pfam" id="PF10431">
    <property type="entry name" value="ClpB_D2-small"/>
    <property type="match status" value="1"/>
</dbReference>
<dbReference type="SMART" id="SM00382">
    <property type="entry name" value="AAA"/>
    <property type="match status" value="1"/>
</dbReference>
<dbReference type="SMART" id="SM01086">
    <property type="entry name" value="ClpB_D2-small"/>
    <property type="match status" value="1"/>
</dbReference>
<dbReference type="SUPFAM" id="SSF52540">
    <property type="entry name" value="P-loop containing nucleoside triphosphate hydrolases"/>
    <property type="match status" value="1"/>
</dbReference>
<keyword id="KW-0067">ATP-binding</keyword>
<keyword id="KW-0143">Chaperone</keyword>
<keyword id="KW-0963">Cytoplasm</keyword>
<keyword id="KW-0547">Nucleotide-binding</keyword>
<keyword id="KW-1185">Reference proteome</keyword>
<comment type="function">
    <text evidence="1">ATPase subunit of a proteasome-like degradation complex; this subunit has chaperone activity. The binding of ATP and its subsequent hydrolysis by HslU are essential for unfolding of protein substrates subsequently hydrolyzed by HslV. HslU recognizes the N-terminal part of its protein substrates and unfolds these before they are guided to HslV for hydrolysis.</text>
</comment>
<comment type="subunit">
    <text evidence="1">A double ring-shaped homohexamer of HslV is capped on each side by a ring-shaped HslU homohexamer. The assembly of the HslU/HslV complex is dependent on binding of ATP.</text>
</comment>
<comment type="subcellular location">
    <subcellularLocation>
        <location evidence="1">Cytoplasm</location>
    </subcellularLocation>
</comment>
<comment type="similarity">
    <text evidence="1">Belongs to the ClpX chaperone family. HslU subfamily.</text>
</comment>
<accession>Q89WN2</accession>
<sequence>MTDFSPREIVSELDRFIVGQTDAKRAVSIALRNRWRRQQLEGSLREEVLPKNILMIGPTGVGKTEIARRLAKLANAPFLKVEATKFTEVGYVGRDVEQIVRDLVEVAIAQVRERKRKDVQARAQLAAEERVLDALVGANASSATRESFRKKLRAGELNDKEIEIETQSSGGGMPMFEIPGMPGAQMGAISIGDIFGKLGGRSKTRRLTVESSHEILINEESDKLLDTEQLTLEAISAVENNGIVFLDEIDKICARDGRVGGDVSREGVQRDLLPLIEGTTVSTKHGAVKTDHILFIASGAFHVAKPSDLLPELQGRLPIRVELQALTRDDMRRILTEPEASLIKQYVALMQTEGVTLDITDNAIDALADVAVAVNSTVENIGARRLQTVMERVLDEISFTAPDRNGETIRVDADFVQKHVGDLAKNADLSRFIL</sequence>
<reference key="1">
    <citation type="journal article" date="2002" name="DNA Res.">
        <title>Complete genomic sequence of nitrogen-fixing symbiotic bacterium Bradyrhizobium japonicum USDA110.</title>
        <authorList>
            <person name="Kaneko T."/>
            <person name="Nakamura Y."/>
            <person name="Sato S."/>
            <person name="Minamisawa K."/>
            <person name="Uchiumi T."/>
            <person name="Sasamoto S."/>
            <person name="Watanabe A."/>
            <person name="Idesawa K."/>
            <person name="Iriguchi M."/>
            <person name="Kawashima K."/>
            <person name="Kohara M."/>
            <person name="Matsumoto M."/>
            <person name="Shimpo S."/>
            <person name="Tsuruoka H."/>
            <person name="Wada T."/>
            <person name="Yamada M."/>
            <person name="Tabata S."/>
        </authorList>
    </citation>
    <scope>NUCLEOTIDE SEQUENCE [LARGE SCALE GENOMIC DNA]</scope>
    <source>
        <strain>JCM 10833 / BCRC 13528 / IAM 13628 / NBRC 14792 / USDA 110</strain>
    </source>
</reference>
<name>HSLU_BRADU</name>
<proteinExistence type="inferred from homology"/>
<feature type="chain" id="PRO_0000160483" description="ATP-dependent protease ATPase subunit HslU">
    <location>
        <begin position="1"/>
        <end position="434"/>
    </location>
</feature>
<feature type="binding site" evidence="1">
    <location>
        <position position="18"/>
    </location>
    <ligand>
        <name>ATP</name>
        <dbReference type="ChEBI" id="CHEBI:30616"/>
    </ligand>
</feature>
<feature type="binding site" evidence="1">
    <location>
        <begin position="60"/>
        <end position="65"/>
    </location>
    <ligand>
        <name>ATP</name>
        <dbReference type="ChEBI" id="CHEBI:30616"/>
    </ligand>
</feature>
<feature type="binding site" evidence="1">
    <location>
        <position position="247"/>
    </location>
    <ligand>
        <name>ATP</name>
        <dbReference type="ChEBI" id="CHEBI:30616"/>
    </ligand>
</feature>
<feature type="binding site" evidence="1">
    <location>
        <position position="312"/>
    </location>
    <ligand>
        <name>ATP</name>
        <dbReference type="ChEBI" id="CHEBI:30616"/>
    </ligand>
</feature>
<feature type="binding site" evidence="1">
    <location>
        <position position="384"/>
    </location>
    <ligand>
        <name>ATP</name>
        <dbReference type="ChEBI" id="CHEBI:30616"/>
    </ligand>
</feature>
<protein>
    <recommendedName>
        <fullName evidence="1">ATP-dependent protease ATPase subunit HslU</fullName>
    </recommendedName>
    <alternativeName>
        <fullName evidence="1">Unfoldase HslU</fullName>
    </alternativeName>
</protein>
<gene>
    <name evidence="1" type="primary">hslU</name>
    <name type="ordered locus">bll0646</name>
</gene>
<organism>
    <name type="scientific">Bradyrhizobium diazoefficiens (strain JCM 10833 / BCRC 13528 / IAM 13628 / NBRC 14792 / USDA 110)</name>
    <dbReference type="NCBI Taxonomy" id="224911"/>
    <lineage>
        <taxon>Bacteria</taxon>
        <taxon>Pseudomonadati</taxon>
        <taxon>Pseudomonadota</taxon>
        <taxon>Alphaproteobacteria</taxon>
        <taxon>Hyphomicrobiales</taxon>
        <taxon>Nitrobacteraceae</taxon>
        <taxon>Bradyrhizobium</taxon>
    </lineage>
</organism>
<evidence type="ECO:0000255" key="1">
    <source>
        <dbReference type="HAMAP-Rule" id="MF_00249"/>
    </source>
</evidence>